<keyword id="KW-1185">Reference proteome</keyword>
<keyword id="KW-0687">Ribonucleoprotein</keyword>
<keyword id="KW-0689">Ribosomal protein</keyword>
<keyword id="KW-0694">RNA-binding</keyword>
<keyword id="KW-0699">rRNA-binding</keyword>
<name>RS11_MYCBO</name>
<comment type="function">
    <text evidence="1">Located on the platform of the 30S subunit, it bridges several disparate RNA helices of the 16S rRNA. Forms part of the Shine-Dalgarno cleft in the 70S ribosome.</text>
</comment>
<comment type="subunit">
    <text evidence="1">Part of the 30S ribosomal subunit. Interacts with proteins S7 and S18. Binds to IF-3.</text>
</comment>
<comment type="similarity">
    <text evidence="1">Belongs to the universal ribosomal protein uS11 family.</text>
</comment>
<comment type="sequence caution" evidence="3">
    <conflict type="frameshift">
        <sequence resource="EMBL-CDS" id="AAB17599"/>
    </conflict>
</comment>
<dbReference type="EMBL" id="U15140">
    <property type="protein sequence ID" value="AAB17599.1"/>
    <property type="status" value="ALT_FRAME"/>
    <property type="molecule type" value="Genomic_DNA"/>
</dbReference>
<dbReference type="EMBL" id="LT708304">
    <property type="protein sequence ID" value="SIU02116.1"/>
    <property type="molecule type" value="Genomic_DNA"/>
</dbReference>
<dbReference type="RefSeq" id="NP_857128.1">
    <property type="nucleotide sequence ID" value="NC_002945.3"/>
</dbReference>
<dbReference type="RefSeq" id="WP_003418357.1">
    <property type="nucleotide sequence ID" value="NC_002945.4"/>
</dbReference>
<dbReference type="SMR" id="P45812"/>
<dbReference type="KEGG" id="mbo:BQ2027_MB3488C"/>
<dbReference type="PATRIC" id="fig|233413.5.peg.3825"/>
<dbReference type="Proteomes" id="UP000001419">
    <property type="component" value="Chromosome"/>
</dbReference>
<dbReference type="GO" id="GO:1990904">
    <property type="term" value="C:ribonucleoprotein complex"/>
    <property type="evidence" value="ECO:0007669"/>
    <property type="project" value="UniProtKB-KW"/>
</dbReference>
<dbReference type="GO" id="GO:0005840">
    <property type="term" value="C:ribosome"/>
    <property type="evidence" value="ECO:0007669"/>
    <property type="project" value="UniProtKB-KW"/>
</dbReference>
<dbReference type="GO" id="GO:0019843">
    <property type="term" value="F:rRNA binding"/>
    <property type="evidence" value="ECO:0007669"/>
    <property type="project" value="UniProtKB-UniRule"/>
</dbReference>
<dbReference type="GO" id="GO:0003735">
    <property type="term" value="F:structural constituent of ribosome"/>
    <property type="evidence" value="ECO:0007669"/>
    <property type="project" value="InterPro"/>
</dbReference>
<dbReference type="GO" id="GO:0006412">
    <property type="term" value="P:translation"/>
    <property type="evidence" value="ECO:0007669"/>
    <property type="project" value="UniProtKB-UniRule"/>
</dbReference>
<dbReference type="FunFam" id="3.30.420.80:FF:000001">
    <property type="entry name" value="30S ribosomal protein S11"/>
    <property type="match status" value="1"/>
</dbReference>
<dbReference type="Gene3D" id="3.30.420.80">
    <property type="entry name" value="Ribosomal protein S11"/>
    <property type="match status" value="1"/>
</dbReference>
<dbReference type="HAMAP" id="MF_01310">
    <property type="entry name" value="Ribosomal_uS11"/>
    <property type="match status" value="1"/>
</dbReference>
<dbReference type="InterPro" id="IPR001971">
    <property type="entry name" value="Ribosomal_uS11"/>
</dbReference>
<dbReference type="InterPro" id="IPR019981">
    <property type="entry name" value="Ribosomal_uS11_bac-type"/>
</dbReference>
<dbReference type="InterPro" id="IPR018102">
    <property type="entry name" value="Ribosomal_uS11_CS"/>
</dbReference>
<dbReference type="InterPro" id="IPR036967">
    <property type="entry name" value="Ribosomal_uS11_sf"/>
</dbReference>
<dbReference type="NCBIfam" id="NF003698">
    <property type="entry name" value="PRK05309.1"/>
    <property type="match status" value="1"/>
</dbReference>
<dbReference type="NCBIfam" id="TIGR03632">
    <property type="entry name" value="uS11_bact"/>
    <property type="match status" value="1"/>
</dbReference>
<dbReference type="PANTHER" id="PTHR11759">
    <property type="entry name" value="40S RIBOSOMAL PROTEIN S14/30S RIBOSOMAL PROTEIN S11"/>
    <property type="match status" value="1"/>
</dbReference>
<dbReference type="Pfam" id="PF00411">
    <property type="entry name" value="Ribosomal_S11"/>
    <property type="match status" value="1"/>
</dbReference>
<dbReference type="PIRSF" id="PIRSF002131">
    <property type="entry name" value="Ribosomal_S11"/>
    <property type="match status" value="1"/>
</dbReference>
<dbReference type="SUPFAM" id="SSF53137">
    <property type="entry name" value="Translational machinery components"/>
    <property type="match status" value="1"/>
</dbReference>
<dbReference type="PROSITE" id="PS00054">
    <property type="entry name" value="RIBOSOMAL_S11"/>
    <property type="match status" value="1"/>
</dbReference>
<feature type="chain" id="PRO_0000123175" description="Small ribosomal subunit protein uS11">
    <location>
        <begin position="1"/>
        <end position="139"/>
    </location>
</feature>
<feature type="region of interest" description="Disordered" evidence="2">
    <location>
        <begin position="1"/>
        <end position="33"/>
    </location>
</feature>
<feature type="compositionally biased region" description="Basic residues" evidence="2">
    <location>
        <begin position="14"/>
        <end position="23"/>
    </location>
</feature>
<feature type="sequence conflict" description="In Ref. 1; AAB17599." evidence="3" ref="1">
    <original>A</original>
    <variation>G</variation>
    <location>
        <position position="53"/>
    </location>
</feature>
<feature type="sequence conflict" description="In Ref. 1; AAB17599." evidence="3" ref="1">
    <original>G</original>
    <variation>V</variation>
    <location>
        <position position="61"/>
    </location>
</feature>
<feature type="sequence conflict" description="In Ref. 1; AAB17599." evidence="3" ref="1">
    <original>A</original>
    <variation>P</variation>
    <location>
        <position position="80"/>
    </location>
</feature>
<feature type="sequence conflict" description="In Ref. 1." evidence="3" ref="1">
    <original>A</original>
    <variation>P</variation>
    <location>
        <position position="106"/>
    </location>
</feature>
<feature type="sequence conflict" description="In Ref. 1." evidence="3" ref="1">
    <original>L</original>
    <variation>V</variation>
    <location>
        <position position="110"/>
    </location>
</feature>
<feature type="sequence conflict" description="In Ref. 1." evidence="3" ref="1">
    <original>Q</original>
    <variation>H</variation>
    <location>
        <position position="126"/>
    </location>
</feature>
<feature type="sequence conflict" description="In Ref. 1; AAB17599." evidence="3" ref="1">
    <original>R</original>
    <variation>H</variation>
    <location>
        <position position="136"/>
    </location>
</feature>
<accession>P45812</accession>
<accession>A0A1R3Y4X9</accession>
<accession>Q7TWG9</accession>
<accession>X2BNI4</accession>
<proteinExistence type="inferred from homology"/>
<evidence type="ECO:0000255" key="1">
    <source>
        <dbReference type="HAMAP-Rule" id="MF_01310"/>
    </source>
</evidence>
<evidence type="ECO:0000256" key="2">
    <source>
        <dbReference type="SAM" id="MobiDB-lite"/>
    </source>
</evidence>
<evidence type="ECO:0000305" key="3"/>
<sequence>MPPAKKGPATSARKGQKTRRREKKNVPHGAAHIKSTFNNTIVTITDPQGNVIAWASSGHVGFKGSRKSTPFAAQLAAENAARKAQDHGVRKVDVFVKGPGSGRETAIRSLQAAGLEVGAISDVTPQPHNGVRPPNRRRV</sequence>
<organism>
    <name type="scientific">Mycobacterium bovis (strain ATCC BAA-935 / AF2122/97)</name>
    <dbReference type="NCBI Taxonomy" id="233413"/>
    <lineage>
        <taxon>Bacteria</taxon>
        <taxon>Bacillati</taxon>
        <taxon>Actinomycetota</taxon>
        <taxon>Actinomycetes</taxon>
        <taxon>Mycobacteriales</taxon>
        <taxon>Mycobacteriaceae</taxon>
        <taxon>Mycobacterium</taxon>
        <taxon>Mycobacterium tuberculosis complex</taxon>
    </lineage>
</organism>
<protein>
    <recommendedName>
        <fullName evidence="1">Small ribosomal subunit protein uS11</fullName>
    </recommendedName>
    <alternativeName>
        <fullName evidence="3">30S ribosomal protein S11</fullName>
    </alternativeName>
</protein>
<reference key="1">
    <citation type="journal article" date="1996" name="Gene">
        <title>Overproduction of mycobacterial ribosomal protein S13 induces catalase/peroxidase activity and hypersensitivity to isoniazid in Mycobacterium smegmatis.</title>
        <authorList>
            <person name="Dubnau E."/>
            <person name="Soares S."/>
            <person name="Huang T.J."/>
            <person name="Jacobs W.R. Jr."/>
        </authorList>
    </citation>
    <scope>NUCLEOTIDE SEQUENCE [GENOMIC DNA]</scope>
    <source>
        <strain>BCG</strain>
    </source>
</reference>
<reference key="2">
    <citation type="journal article" date="2003" name="Proc. Natl. Acad. Sci. U.S.A.">
        <title>The complete genome sequence of Mycobacterium bovis.</title>
        <authorList>
            <person name="Garnier T."/>
            <person name="Eiglmeier K."/>
            <person name="Camus J.-C."/>
            <person name="Medina N."/>
            <person name="Mansoor H."/>
            <person name="Pryor M."/>
            <person name="Duthoy S."/>
            <person name="Grondin S."/>
            <person name="Lacroix C."/>
            <person name="Monsempe C."/>
            <person name="Simon S."/>
            <person name="Harris B."/>
            <person name="Atkin R."/>
            <person name="Doggett J."/>
            <person name="Mayes R."/>
            <person name="Keating L."/>
            <person name="Wheeler P.R."/>
            <person name="Parkhill J."/>
            <person name="Barrell B.G."/>
            <person name="Cole S.T."/>
            <person name="Gordon S.V."/>
            <person name="Hewinson R.G."/>
        </authorList>
    </citation>
    <scope>NUCLEOTIDE SEQUENCE [LARGE SCALE GENOMIC DNA]</scope>
    <source>
        <strain>ATCC BAA-935 / AF2122/97</strain>
    </source>
</reference>
<reference key="3">
    <citation type="journal article" date="2017" name="Genome Announc.">
        <title>Updated reference genome sequence and annotation of Mycobacterium bovis AF2122/97.</title>
        <authorList>
            <person name="Malone K.M."/>
            <person name="Farrell D."/>
            <person name="Stuber T.P."/>
            <person name="Schubert O.T."/>
            <person name="Aebersold R."/>
            <person name="Robbe-Austerman S."/>
            <person name="Gordon S.V."/>
        </authorList>
    </citation>
    <scope>NUCLEOTIDE SEQUENCE [LARGE SCALE GENOMIC DNA]</scope>
    <scope>GENOME REANNOTATION</scope>
    <source>
        <strain>ATCC BAA-935 / AF2122/97</strain>
    </source>
</reference>
<gene>
    <name evidence="1" type="primary">rpsK</name>
    <name type="ordered locus">BQ2027_MB3488C</name>
</gene>